<gene>
    <name type="primary">forJ</name>
    <name type="ORF">DDB_G0291378</name>
</gene>
<name>FORJ_DICDI</name>
<organism>
    <name type="scientific">Dictyostelium discoideum</name>
    <name type="common">Social amoeba</name>
    <dbReference type="NCBI Taxonomy" id="44689"/>
    <lineage>
        <taxon>Eukaryota</taxon>
        <taxon>Amoebozoa</taxon>
        <taxon>Evosea</taxon>
        <taxon>Eumycetozoa</taxon>
        <taxon>Dictyostelia</taxon>
        <taxon>Dictyosteliales</taxon>
        <taxon>Dictyosteliaceae</taxon>
        <taxon>Dictyostelium</taxon>
    </lineage>
</organism>
<proteinExistence type="evidence at protein level"/>
<reference key="1">
    <citation type="journal article" date="2005" name="Nature">
        <title>The genome of the social amoeba Dictyostelium discoideum.</title>
        <authorList>
            <person name="Eichinger L."/>
            <person name="Pachebat J.A."/>
            <person name="Gloeckner G."/>
            <person name="Rajandream M.A."/>
            <person name="Sucgang R."/>
            <person name="Berriman M."/>
            <person name="Song J."/>
            <person name="Olsen R."/>
            <person name="Szafranski K."/>
            <person name="Xu Q."/>
            <person name="Tunggal B."/>
            <person name="Kummerfeld S."/>
            <person name="Madera M."/>
            <person name="Konfortov B.A."/>
            <person name="Rivero F."/>
            <person name="Bankier A.T."/>
            <person name="Lehmann R."/>
            <person name="Hamlin N."/>
            <person name="Davies R."/>
            <person name="Gaudet P."/>
            <person name="Fey P."/>
            <person name="Pilcher K."/>
            <person name="Chen G."/>
            <person name="Saunders D."/>
            <person name="Sodergren E.J."/>
            <person name="Davis P."/>
            <person name="Kerhornou A."/>
            <person name="Nie X."/>
            <person name="Hall N."/>
            <person name="Anjard C."/>
            <person name="Hemphill L."/>
            <person name="Bason N."/>
            <person name="Farbrother P."/>
            <person name="Desany B."/>
            <person name="Just E."/>
            <person name="Morio T."/>
            <person name="Rost R."/>
            <person name="Churcher C.M."/>
            <person name="Cooper J."/>
            <person name="Haydock S."/>
            <person name="van Driessche N."/>
            <person name="Cronin A."/>
            <person name="Goodhead I."/>
            <person name="Muzny D.M."/>
            <person name="Mourier T."/>
            <person name="Pain A."/>
            <person name="Lu M."/>
            <person name="Harper D."/>
            <person name="Lindsay R."/>
            <person name="Hauser H."/>
            <person name="James K.D."/>
            <person name="Quiles M."/>
            <person name="Madan Babu M."/>
            <person name="Saito T."/>
            <person name="Buchrieser C."/>
            <person name="Wardroper A."/>
            <person name="Felder M."/>
            <person name="Thangavelu M."/>
            <person name="Johnson D."/>
            <person name="Knights A."/>
            <person name="Loulseged H."/>
            <person name="Mungall K.L."/>
            <person name="Oliver K."/>
            <person name="Price C."/>
            <person name="Quail M.A."/>
            <person name="Urushihara H."/>
            <person name="Hernandez J."/>
            <person name="Rabbinowitsch E."/>
            <person name="Steffen D."/>
            <person name="Sanders M."/>
            <person name="Ma J."/>
            <person name="Kohara Y."/>
            <person name="Sharp S."/>
            <person name="Simmonds M.N."/>
            <person name="Spiegler S."/>
            <person name="Tivey A."/>
            <person name="Sugano S."/>
            <person name="White B."/>
            <person name="Walker D."/>
            <person name="Woodward J.R."/>
            <person name="Winckler T."/>
            <person name="Tanaka Y."/>
            <person name="Shaulsky G."/>
            <person name="Schleicher M."/>
            <person name="Weinstock G.M."/>
            <person name="Rosenthal A."/>
            <person name="Cox E.C."/>
            <person name="Chisholm R.L."/>
            <person name="Gibbs R.A."/>
            <person name="Loomis W.F."/>
            <person name="Platzer M."/>
            <person name="Kay R.R."/>
            <person name="Williams J.G."/>
            <person name="Dear P.H."/>
            <person name="Noegel A.A."/>
            <person name="Barrell B.G."/>
            <person name="Kuspa A."/>
        </authorList>
    </citation>
    <scope>NUCLEOTIDE SEQUENCE [LARGE SCALE GENOMIC DNA]</scope>
    <source>
        <strain>AX4</strain>
    </source>
</reference>
<reference key="2">
    <citation type="journal article" date="2004" name="Protoplasma">
        <title>Evolutionarily conserved modules in actin nucleation: lessons from Dictyostelium discoideum and plants. Review article.</title>
        <authorList>
            <person name="Cvrckova F."/>
            <person name="Rivero F."/>
            <person name="Bavlnka B."/>
        </authorList>
    </citation>
    <scope>NOMENCLATURE</scope>
</reference>
<reference key="3">
    <citation type="journal article" date="2005" name="BMC Genomics">
        <title>A comparative sequence analysis reveals a common GBD/FH3-FH1-FH2-DAD architecture in formins from Dictyostelium, fungi and metazoa.</title>
        <authorList>
            <person name="Rivero F."/>
            <person name="Muramoto T."/>
            <person name="Meyer A.-K."/>
            <person name="Urushihara H."/>
            <person name="Uyeda T.Q.P."/>
            <person name="Kitayama C."/>
        </authorList>
    </citation>
    <scope>DEVELOPMENTAL STAGE</scope>
</reference>
<reference key="4">
    <citation type="journal article" date="2006" name="Eur. J. Cell Biol.">
        <title>Rho GTPase signaling in Dictyostelium discoideum: insights from the genome.</title>
        <authorList>
            <person name="Vlahou G."/>
            <person name="Rivero F."/>
        </authorList>
    </citation>
    <scope>INTERACTION WITH RHO GTPASE</scope>
</reference>
<feature type="chain" id="PRO_0000363921" description="Formin-J">
    <location>
        <begin position="1"/>
        <end position="2546"/>
    </location>
</feature>
<feature type="domain" description="FHA" evidence="3">
    <location>
        <begin position="391"/>
        <end position="444"/>
    </location>
</feature>
<feature type="domain" description="GBD/FH3" evidence="4">
    <location>
        <begin position="457"/>
        <end position="963"/>
    </location>
</feature>
<feature type="domain" description="FH1">
    <location>
        <begin position="1072"/>
        <end position="1098"/>
    </location>
</feature>
<feature type="domain" description="FH2" evidence="5">
    <location>
        <begin position="1106"/>
        <end position="1495"/>
    </location>
</feature>
<feature type="domain" description="DAD">
    <location>
        <begin position="1563"/>
        <end position="1593"/>
    </location>
</feature>
<feature type="region of interest" description="Disordered" evidence="6">
    <location>
        <begin position="1"/>
        <end position="40"/>
    </location>
</feature>
<feature type="region of interest" description="Disordered" evidence="6">
    <location>
        <begin position="61"/>
        <end position="108"/>
    </location>
</feature>
<feature type="region of interest" description="Disordered" evidence="6">
    <location>
        <begin position="188"/>
        <end position="270"/>
    </location>
</feature>
<feature type="region of interest" description="Disordered" evidence="6">
    <location>
        <begin position="369"/>
        <end position="414"/>
    </location>
</feature>
<feature type="region of interest" description="Disordered" evidence="6">
    <location>
        <begin position="502"/>
        <end position="541"/>
    </location>
</feature>
<feature type="region of interest" description="Disordered" evidence="6">
    <location>
        <begin position="802"/>
        <end position="849"/>
    </location>
</feature>
<feature type="region of interest" description="Disordered" evidence="6">
    <location>
        <begin position="879"/>
        <end position="898"/>
    </location>
</feature>
<feature type="region of interest" description="Disordered" evidence="6">
    <location>
        <begin position="987"/>
        <end position="1101"/>
    </location>
</feature>
<feature type="region of interest" description="Disordered" evidence="6">
    <location>
        <begin position="1485"/>
        <end position="1529"/>
    </location>
</feature>
<feature type="region of interest" description="Disordered" evidence="6">
    <location>
        <begin position="1558"/>
        <end position="1601"/>
    </location>
</feature>
<feature type="region of interest" description="Disordered" evidence="6">
    <location>
        <begin position="1659"/>
        <end position="1775"/>
    </location>
</feature>
<feature type="region of interest" description="Disordered" evidence="6">
    <location>
        <begin position="1840"/>
        <end position="1869"/>
    </location>
</feature>
<feature type="region of interest" description="Disordered" evidence="6">
    <location>
        <begin position="2014"/>
        <end position="2033"/>
    </location>
</feature>
<feature type="region of interest" description="Disordered" evidence="6">
    <location>
        <begin position="2121"/>
        <end position="2369"/>
    </location>
</feature>
<feature type="region of interest" description="Disordered" evidence="6">
    <location>
        <begin position="2381"/>
        <end position="2473"/>
    </location>
</feature>
<feature type="region of interest" description="Disordered" evidence="6">
    <location>
        <begin position="2485"/>
        <end position="2510"/>
    </location>
</feature>
<feature type="coiled-coil region" evidence="2">
    <location>
        <begin position="2067"/>
        <end position="2118"/>
    </location>
</feature>
<feature type="compositionally biased region" description="Low complexity" evidence="6">
    <location>
        <begin position="16"/>
        <end position="37"/>
    </location>
</feature>
<feature type="compositionally biased region" description="Low complexity" evidence="6">
    <location>
        <begin position="62"/>
        <end position="98"/>
    </location>
</feature>
<feature type="compositionally biased region" description="Polar residues" evidence="6">
    <location>
        <begin position="99"/>
        <end position="108"/>
    </location>
</feature>
<feature type="compositionally biased region" description="Polar residues" evidence="6">
    <location>
        <begin position="188"/>
        <end position="198"/>
    </location>
</feature>
<feature type="compositionally biased region" description="Low complexity" evidence="6">
    <location>
        <begin position="203"/>
        <end position="237"/>
    </location>
</feature>
<feature type="compositionally biased region" description="Low complexity" evidence="6">
    <location>
        <begin position="247"/>
        <end position="270"/>
    </location>
</feature>
<feature type="compositionally biased region" description="Polar residues" evidence="6">
    <location>
        <begin position="377"/>
        <end position="389"/>
    </location>
</feature>
<feature type="compositionally biased region" description="Low complexity" evidence="6">
    <location>
        <begin position="390"/>
        <end position="414"/>
    </location>
</feature>
<feature type="compositionally biased region" description="Low complexity" evidence="6">
    <location>
        <begin position="502"/>
        <end position="513"/>
    </location>
</feature>
<feature type="compositionally biased region" description="Polar residues" evidence="6">
    <location>
        <begin position="879"/>
        <end position="891"/>
    </location>
</feature>
<feature type="compositionally biased region" description="Polar residues" evidence="6">
    <location>
        <begin position="992"/>
        <end position="1007"/>
    </location>
</feature>
<feature type="compositionally biased region" description="Pro residues" evidence="6">
    <location>
        <begin position="1033"/>
        <end position="1042"/>
    </location>
</feature>
<feature type="compositionally biased region" description="Low complexity" evidence="6">
    <location>
        <begin position="1043"/>
        <end position="1056"/>
    </location>
</feature>
<feature type="compositionally biased region" description="Pro residues" evidence="6">
    <location>
        <begin position="1057"/>
        <end position="1097"/>
    </location>
</feature>
<feature type="compositionally biased region" description="Polar residues" evidence="6">
    <location>
        <begin position="1492"/>
        <end position="1502"/>
    </location>
</feature>
<feature type="compositionally biased region" description="Low complexity" evidence="6">
    <location>
        <begin position="1507"/>
        <end position="1529"/>
    </location>
</feature>
<feature type="compositionally biased region" description="Low complexity" evidence="6">
    <location>
        <begin position="1665"/>
        <end position="1679"/>
    </location>
</feature>
<feature type="compositionally biased region" description="Basic and acidic residues" evidence="6">
    <location>
        <begin position="1687"/>
        <end position="1717"/>
    </location>
</feature>
<feature type="compositionally biased region" description="Low complexity" evidence="6">
    <location>
        <begin position="1732"/>
        <end position="1745"/>
    </location>
</feature>
<feature type="compositionally biased region" description="Polar residues" evidence="6">
    <location>
        <begin position="1746"/>
        <end position="1757"/>
    </location>
</feature>
<feature type="compositionally biased region" description="Low complexity" evidence="6">
    <location>
        <begin position="1763"/>
        <end position="1775"/>
    </location>
</feature>
<feature type="compositionally biased region" description="Low complexity" evidence="6">
    <location>
        <begin position="1841"/>
        <end position="1853"/>
    </location>
</feature>
<feature type="compositionally biased region" description="Low complexity" evidence="6">
    <location>
        <begin position="2121"/>
        <end position="2154"/>
    </location>
</feature>
<feature type="compositionally biased region" description="Polar residues" evidence="6">
    <location>
        <begin position="2160"/>
        <end position="2179"/>
    </location>
</feature>
<feature type="compositionally biased region" description="Low complexity" evidence="6">
    <location>
        <begin position="2188"/>
        <end position="2206"/>
    </location>
</feature>
<feature type="compositionally biased region" description="Low complexity" evidence="6">
    <location>
        <begin position="2237"/>
        <end position="2256"/>
    </location>
</feature>
<feature type="compositionally biased region" description="Polar residues" evidence="6">
    <location>
        <begin position="2274"/>
        <end position="2287"/>
    </location>
</feature>
<feature type="compositionally biased region" description="Low complexity" evidence="6">
    <location>
        <begin position="2302"/>
        <end position="2315"/>
    </location>
</feature>
<feature type="compositionally biased region" description="Basic residues" evidence="6">
    <location>
        <begin position="2332"/>
        <end position="2342"/>
    </location>
</feature>
<feature type="compositionally biased region" description="Low complexity" evidence="6">
    <location>
        <begin position="2388"/>
        <end position="2439"/>
    </location>
</feature>
<feature type="compositionally biased region" description="Low complexity" evidence="6">
    <location>
        <begin position="2459"/>
        <end position="2473"/>
    </location>
</feature>
<feature type="compositionally biased region" description="Low complexity" evidence="6">
    <location>
        <begin position="2485"/>
        <end position="2497"/>
    </location>
</feature>
<feature type="compositionally biased region" description="Polar residues" evidence="6">
    <location>
        <begin position="2499"/>
        <end position="2508"/>
    </location>
</feature>
<keyword id="KW-0009">Actin-binding</keyword>
<keyword id="KW-0175">Coiled coil</keyword>
<keyword id="KW-1185">Reference proteome</keyword>
<dbReference type="EMBL" id="AAFI02000177">
    <property type="protein sequence ID" value="EAL61673.1"/>
    <property type="molecule type" value="Genomic_DNA"/>
</dbReference>
<dbReference type="RefSeq" id="XP_635175.1">
    <property type="nucleotide sequence ID" value="XM_630083.1"/>
</dbReference>
<dbReference type="SMR" id="Q54ER5"/>
<dbReference type="FunCoup" id="Q54ER5">
    <property type="interactions" value="435"/>
</dbReference>
<dbReference type="STRING" id="44689.Q54ER5"/>
<dbReference type="PaxDb" id="44689-DDB0231633"/>
<dbReference type="EnsemblProtists" id="EAL61673">
    <property type="protein sequence ID" value="EAL61673"/>
    <property type="gene ID" value="DDB_G0291378"/>
</dbReference>
<dbReference type="GeneID" id="8628121"/>
<dbReference type="KEGG" id="ddi:DDB_G0291378"/>
<dbReference type="dictyBase" id="DDB_G0291378">
    <property type="gene designation" value="forJ"/>
</dbReference>
<dbReference type="VEuPathDB" id="AmoebaDB:DDB_G0291378"/>
<dbReference type="eggNOG" id="KOG1922">
    <property type="taxonomic scope" value="Eukaryota"/>
</dbReference>
<dbReference type="HOGENOM" id="CLU_228212_0_0_1"/>
<dbReference type="InParanoid" id="Q54ER5"/>
<dbReference type="OMA" id="WVIDCLT"/>
<dbReference type="PRO" id="PR:Q54ER5"/>
<dbReference type="Proteomes" id="UP000002195">
    <property type="component" value="Chromosome 6"/>
</dbReference>
<dbReference type="GO" id="GO:0003779">
    <property type="term" value="F:actin binding"/>
    <property type="evidence" value="ECO:0007669"/>
    <property type="project" value="UniProtKB-KW"/>
</dbReference>
<dbReference type="GO" id="GO:0005522">
    <property type="term" value="F:profilin binding"/>
    <property type="evidence" value="ECO:0000250"/>
    <property type="project" value="dictyBase"/>
</dbReference>
<dbReference type="GO" id="GO:0007015">
    <property type="term" value="P:actin filament organization"/>
    <property type="evidence" value="ECO:0007669"/>
    <property type="project" value="UniProtKB-ARBA"/>
</dbReference>
<dbReference type="CDD" id="cd00060">
    <property type="entry name" value="FHA"/>
    <property type="match status" value="1"/>
</dbReference>
<dbReference type="Gene3D" id="2.60.200.20">
    <property type="match status" value="1"/>
</dbReference>
<dbReference type="Gene3D" id="1.20.58.2220">
    <property type="entry name" value="Formin, FH2 domain"/>
    <property type="match status" value="1"/>
</dbReference>
<dbReference type="Gene3D" id="1.25.10.10">
    <property type="entry name" value="Leucine-rich Repeat Variant"/>
    <property type="match status" value="1"/>
</dbReference>
<dbReference type="InterPro" id="IPR011989">
    <property type="entry name" value="ARM-like"/>
</dbReference>
<dbReference type="InterPro" id="IPR016024">
    <property type="entry name" value="ARM-type_fold"/>
</dbReference>
<dbReference type="InterPro" id="IPR015425">
    <property type="entry name" value="FH2_Formin"/>
</dbReference>
<dbReference type="InterPro" id="IPR042201">
    <property type="entry name" value="FH2_Formin_sf"/>
</dbReference>
<dbReference type="InterPro" id="IPR000253">
    <property type="entry name" value="FHA_dom"/>
</dbReference>
<dbReference type="InterPro" id="IPR051144">
    <property type="entry name" value="Formin_homology_domain"/>
</dbReference>
<dbReference type="InterPro" id="IPR014768">
    <property type="entry name" value="GBD/FH3_dom"/>
</dbReference>
<dbReference type="InterPro" id="IPR008984">
    <property type="entry name" value="SMAD_FHA_dom_sf"/>
</dbReference>
<dbReference type="PANTHER" id="PTHR45733">
    <property type="entry name" value="FORMIN-J"/>
    <property type="match status" value="1"/>
</dbReference>
<dbReference type="PANTHER" id="PTHR45733:SF8">
    <property type="entry name" value="FORMIN-J"/>
    <property type="match status" value="1"/>
</dbReference>
<dbReference type="Pfam" id="PF02181">
    <property type="entry name" value="FH2"/>
    <property type="match status" value="1"/>
</dbReference>
<dbReference type="Pfam" id="PF00498">
    <property type="entry name" value="FHA"/>
    <property type="match status" value="1"/>
</dbReference>
<dbReference type="SMART" id="SM00498">
    <property type="entry name" value="FH2"/>
    <property type="match status" value="1"/>
</dbReference>
<dbReference type="SUPFAM" id="SSF48371">
    <property type="entry name" value="ARM repeat"/>
    <property type="match status" value="1"/>
</dbReference>
<dbReference type="SUPFAM" id="SSF101447">
    <property type="entry name" value="Formin homology 2 domain (FH2 domain)"/>
    <property type="match status" value="1"/>
</dbReference>
<dbReference type="SUPFAM" id="SSF49879">
    <property type="entry name" value="SMAD/FHA domain"/>
    <property type="match status" value="1"/>
</dbReference>
<dbReference type="PROSITE" id="PS51444">
    <property type="entry name" value="FH2"/>
    <property type="match status" value="1"/>
</dbReference>
<dbReference type="PROSITE" id="PS50006">
    <property type="entry name" value="FHA_DOMAIN"/>
    <property type="match status" value="1"/>
</dbReference>
<dbReference type="PROSITE" id="PS51232">
    <property type="entry name" value="GBD_FH3"/>
    <property type="match status" value="1"/>
</dbReference>
<sequence length="2546" mass="279879">MEENTNNIDNGHMGDNNNENNNNSNNNNNNNSNSSSSFVKGRIDSLNKSTNGLIKIGRSVENSNNSITSGGSSSNSGEISSNNNNNNNNNGILKNSTSGSKDNTPLSESSINLRSIKTSGENKLNSSSSSNSNNNNIGVINKGVSTNLKSIMNALSSKSSENLSNFNNNNSLSSSPLKENQLVKSFDKNITPSKNNSPRAHLNNNNNNNNNNNNNNNNNNNNNNNNNNNNNNNNNNNTTPTLNSPRNKNSIYNTNSNNNSNTTNSTPNSAITPNIIVENKIKEKIQLWGMLKSNCKKYKDMELNQIETSFGRGSADYNFDDEKVVSSNHFKIILHKTVLPYGISNGSLNNSPKPLSTIIPSSNTITTATTNNNNDNAESLTTYSESSEISTDSTGVCSSSSSTSSTLSSKSSSSSSFNKFMEFLLIYIEDNDSTNGTWVNGNKLNRGERVQLDDKSKITLSTPDFSSLSFTFESNISSLSDEEKGKLLKAIVILKDSLDDSTNSFGSSTTTTISGGGSGSSSVNSSGGGSGTTPINVTPNSSNVSVTKKVINRTPSFKMSNLSTKPEGFVSILKNEPTLKNIQLLLSTIKTSDDQWKENFIQTDCILMIVDLLSSNYKKLRYNEIDQAIDIECLSILSTIFTCSKSNQNALKQLSKSNELNFNDIFMLFLLNQQNSNHSVKTKSQFLQFLNSITSNEICHKMIISSIEKIHSIKKDKLKFKWLVESMVFESDFQYKLQSLTLINSLLSNCKNQTTLTKIKSDLQSLGIGKINDLLVLDSSIKEMSIQLTKFNNNFNSSSSSSSISSNSINNSQNNNNNNNNNNNTNNNNNNNSNNNNINNNNNNLNTRKNNFNCKTLNLKDPISLVLLLQNELKSNFSTSVPTSPTSKNPLITSNNNNTSIGNNSNNIITSILTDLYKIANNNNNNNNNTNNKPKMDSNSALTLLSDFSKIISSSISNEQEYQKSIPVLEEKIKILIPSFNNTCNNTTNNNSSAKNIEVDSSVNKSPNTEEDSTKKTINNSPAEDAQIVSASVPPPPPPPPGGNNNNESDVPSSSGGPPPPPPPPPPPGKSSGGGPPPPPPPPPKGGKGGPPPPPPIGGIGSKVVKVKEEQPSVPMKQLFWSKVPVAKTKKTIWENKSDKFELDKIQIEQLFCQKKPANGKGSPKDGIEKEKEEKLELLDPRRSYAVSILISKYKLTPIWVIDCLTSMDDKKLSKDMVRVLLHIVATNEEEEQFKKYEGDKSQLSDVDQFIIETLKVPKIRQRLECIEYKIQFESTLQELVLNAKCVQQVSTSIMSSTSFHGLLHFILRIGNYMNAGSSRGNAEGFKLGFLLTVGNTKSLDNKTSLLNYIIQFISEKYPQFLITKSTIPHLEQASRILWSEMLSQFEQLKSGMSMVQKELELQIKQIGSDNFTHKFKKFTSSKAEHLDSLQIFIKQVEETYQSTIAYFCEENIQPEEFFQIIFNFINLVLKVHKENEDIRIAALPKSKKYQEQQNKPTQNNDHSTKSKLSNLPSSSSINDESSSSASLSSLSTNVNANTENDNLELSKLGFLSKLRKKRSKSEQEPVVEPIQITPKVGSAASAEPSPSIKSRDKKESFKSPIFRSPKFKVSSISPKLKATLNSISKTLRKQQVESPSPNMSPFTSTAISEKASIYDKNINNIQPSSSSSSSSSSSSSSSTITGKKSHNTESEIKKEFISNSSMDKDKEKIKEKEKGTISKGKALLFGHSRSKSTTTSPSSSSSKKQIPSLSECLQESNKTHSRSSSYSPNSKVNSQLMSNPFIMMEQKQPKDSLPIAKDSKEIHNMGTTTTTTPIKVEKIVSVNEKPTIVTMQTKPIPLVPTTTTSTTTTTQTTPPPVTINEKEKETQSKEVITKDFRDIKLKQTGIIEEDRKIQQERQRQFKTFNGKLNSTNKFRTSSSAVFSRNKSLQNINSTKNPSSVGFGDLDLFQKENITINSIKQKLLLKQTQIRSTRTDSSRIKKGKNVSQIVKQVENESPLPNPNKTLSAIRRHNSNLSRKSSKSSNNSSTSSLESLVQTNVINGLNNLKSVSSSSSSSSSMVVNKNGIDDNQQKQQKQQQQQQQQQQQQQQLPQPQQQQQQQQQQQQQQQQQQQQQQQQPQQQSTTTTTISTHHPQLKQVQPQSPSSLSQQPTQQILKPAQPSSPLQSHYKPQQKPQTTYIPKPKPYIANPFPSSTTSTNSSPSNASDLTEVIKSTQSPFEREQTFTKPTLQPVKYPSSASSNSSSVSGSSQSTPLSAASLQPVGNRNLRKQHVTPPSSSISNSTATTKSKKEGNIRFVDQASPSSSSLEQSSNASNAGYTSPPRENSFSNLFKKHKKSHSKSKSTDNTLNGEIESVDENEKSRKKPKTVTKIIDFSKKLFSHKKSKSVDQSSKSNNTNNNNNNNNNNNNNNNNNNSNIDYNNSLNDVGSSSSFSSSSSSPTSNPFPIIQPPNQSPPTKNISSGNISNNTSYSSLGSMNGNNLVASPSSSITSCKPSPGAVSSTSSTLKTPDFFDHKKVQTPEQLGIKSTDIPKVIIIPPNFYQQPV</sequence>
<protein>
    <recommendedName>
        <fullName>Formin-J</fullName>
    </recommendedName>
</protein>
<accession>Q54ER5</accession>
<evidence type="ECO:0000250" key="1"/>
<evidence type="ECO:0000255" key="2"/>
<evidence type="ECO:0000255" key="3">
    <source>
        <dbReference type="PROSITE-ProRule" id="PRU00086"/>
    </source>
</evidence>
<evidence type="ECO:0000255" key="4">
    <source>
        <dbReference type="PROSITE-ProRule" id="PRU00579"/>
    </source>
</evidence>
<evidence type="ECO:0000255" key="5">
    <source>
        <dbReference type="PROSITE-ProRule" id="PRU00774"/>
    </source>
</evidence>
<evidence type="ECO:0000256" key="6">
    <source>
        <dbReference type="SAM" id="MobiDB-lite"/>
    </source>
</evidence>
<evidence type="ECO:0000269" key="7">
    <source>
    </source>
</evidence>
<evidence type="ECO:0000269" key="8">
    <source>
    </source>
</evidence>
<evidence type="ECO:0000305" key="9"/>
<comment type="function">
    <text evidence="1">Formins play an important role in the nucleation of actin and the formation of linear actin filaments.</text>
</comment>
<comment type="subunit">
    <text evidence="8">Interacts (via GBD/FH3 domain) with activated Rho-GTPases.</text>
</comment>
<comment type="developmental stage">
    <text evidence="7">Expression increases during transition to multi-cellular stages, and levels remain constantly high throughout the rest of development.</text>
</comment>
<comment type="domain">
    <text evidence="1">The DAD domain regulates activation via by an autoinhibitory interaction with the GBD/FH3 domain. This autoinhibition is released upon competitive binding of an activated GTPase. The release of DAD allows the FH2 domain to then nucleate and elongate nonbranched actin filaments (By similarity).</text>
</comment>
<comment type="similarity">
    <text evidence="9">Belongs to the formin homology family. Diaphanous subfamily.</text>
</comment>